<comment type="function">
    <text evidence="1">Catalyzes the phosphorylation of N-acetylmannosamine (ManNAc) to ManNAc-6-P.</text>
</comment>
<comment type="catalytic activity">
    <reaction evidence="1">
        <text>an N-acyl-D-mannosamine + ATP = an N-acyl-D-mannosamine 6-phosphate + ADP + H(+)</text>
        <dbReference type="Rhea" id="RHEA:23832"/>
        <dbReference type="ChEBI" id="CHEBI:15378"/>
        <dbReference type="ChEBI" id="CHEBI:16062"/>
        <dbReference type="ChEBI" id="CHEBI:30616"/>
        <dbReference type="ChEBI" id="CHEBI:57666"/>
        <dbReference type="ChEBI" id="CHEBI:456216"/>
        <dbReference type="EC" id="2.7.1.60"/>
    </reaction>
</comment>
<comment type="pathway">
    <text evidence="1">Amino-sugar metabolism; N-acetylneuraminate degradation; D-fructose 6-phosphate from N-acetylneuraminate: step 2/5.</text>
</comment>
<comment type="subunit">
    <text evidence="1">Homodimer.</text>
</comment>
<comment type="similarity">
    <text evidence="1">Belongs to the ROK (NagC/XylR) family. NanK subfamily.</text>
</comment>
<evidence type="ECO:0000255" key="1">
    <source>
        <dbReference type="HAMAP-Rule" id="MF_01234"/>
    </source>
</evidence>
<gene>
    <name evidence="1" type="primary">nanK</name>
    <name type="ordered locus">VC0395_A1379</name>
    <name type="ordered locus">VC395_1896</name>
</gene>
<dbReference type="EC" id="2.7.1.60" evidence="1"/>
<dbReference type="EMBL" id="CP000627">
    <property type="protein sequence ID" value="ABQ20894.1"/>
    <property type="molecule type" value="Genomic_DNA"/>
</dbReference>
<dbReference type="EMBL" id="CP001235">
    <property type="protein sequence ID" value="ACP09892.1"/>
    <property type="molecule type" value="Genomic_DNA"/>
</dbReference>
<dbReference type="RefSeq" id="WP_001259414.1">
    <property type="nucleotide sequence ID" value="NZ_JAACZH010000016.1"/>
</dbReference>
<dbReference type="SMR" id="A5F7C0"/>
<dbReference type="KEGG" id="vco:VC0395_A1379"/>
<dbReference type="KEGG" id="vcr:VC395_1896"/>
<dbReference type="PATRIC" id="fig|345073.21.peg.1836"/>
<dbReference type="eggNOG" id="COG1940">
    <property type="taxonomic scope" value="Bacteria"/>
</dbReference>
<dbReference type="HOGENOM" id="CLU_036604_0_4_6"/>
<dbReference type="OrthoDB" id="8772678at2"/>
<dbReference type="UniPathway" id="UPA00629">
    <property type="reaction ID" value="UER00681"/>
</dbReference>
<dbReference type="Proteomes" id="UP000000249">
    <property type="component" value="Chromosome 2"/>
</dbReference>
<dbReference type="GO" id="GO:0005524">
    <property type="term" value="F:ATP binding"/>
    <property type="evidence" value="ECO:0007669"/>
    <property type="project" value="UniProtKB-UniRule"/>
</dbReference>
<dbReference type="GO" id="GO:0009384">
    <property type="term" value="F:N-acylmannosamine kinase activity"/>
    <property type="evidence" value="ECO:0007669"/>
    <property type="project" value="UniProtKB-UniRule"/>
</dbReference>
<dbReference type="GO" id="GO:0008270">
    <property type="term" value="F:zinc ion binding"/>
    <property type="evidence" value="ECO:0007669"/>
    <property type="project" value="UniProtKB-UniRule"/>
</dbReference>
<dbReference type="GO" id="GO:0019262">
    <property type="term" value="P:N-acetylneuraminate catabolic process"/>
    <property type="evidence" value="ECO:0007669"/>
    <property type="project" value="UniProtKB-UniRule"/>
</dbReference>
<dbReference type="Gene3D" id="3.30.420.40">
    <property type="match status" value="2"/>
</dbReference>
<dbReference type="HAMAP" id="MF_01234">
    <property type="entry name" value="ManNAc_kinase"/>
    <property type="match status" value="1"/>
</dbReference>
<dbReference type="InterPro" id="IPR043129">
    <property type="entry name" value="ATPase_NBD"/>
</dbReference>
<dbReference type="InterPro" id="IPR023945">
    <property type="entry name" value="ManNAc_kinase_bac"/>
</dbReference>
<dbReference type="InterPro" id="IPR000600">
    <property type="entry name" value="ROK"/>
</dbReference>
<dbReference type="InterPro" id="IPR049874">
    <property type="entry name" value="ROK_cs"/>
</dbReference>
<dbReference type="NCBIfam" id="NF003461">
    <property type="entry name" value="PRK05082.1"/>
    <property type="match status" value="1"/>
</dbReference>
<dbReference type="PANTHER" id="PTHR18964:SF169">
    <property type="entry name" value="N-ACETYLMANNOSAMINE KINASE"/>
    <property type="match status" value="1"/>
</dbReference>
<dbReference type="PANTHER" id="PTHR18964">
    <property type="entry name" value="ROK (REPRESSOR, ORF, KINASE) FAMILY"/>
    <property type="match status" value="1"/>
</dbReference>
<dbReference type="Pfam" id="PF00480">
    <property type="entry name" value="ROK"/>
    <property type="match status" value="1"/>
</dbReference>
<dbReference type="SUPFAM" id="SSF53067">
    <property type="entry name" value="Actin-like ATPase domain"/>
    <property type="match status" value="1"/>
</dbReference>
<dbReference type="PROSITE" id="PS01125">
    <property type="entry name" value="ROK"/>
    <property type="match status" value="1"/>
</dbReference>
<name>NANK_VIBC3</name>
<protein>
    <recommendedName>
        <fullName evidence="1">N-acetylmannosamine kinase</fullName>
        <ecNumber evidence="1">2.7.1.60</ecNumber>
    </recommendedName>
    <alternativeName>
        <fullName evidence="1">ManNAc kinase</fullName>
    </alternativeName>
    <alternativeName>
        <fullName evidence="1">N-acetyl-D-mannosamine kinase</fullName>
    </alternativeName>
</protein>
<organism>
    <name type="scientific">Vibrio cholerae serotype O1 (strain ATCC 39541 / Classical Ogawa 395 / O395)</name>
    <dbReference type="NCBI Taxonomy" id="345073"/>
    <lineage>
        <taxon>Bacteria</taxon>
        <taxon>Pseudomonadati</taxon>
        <taxon>Pseudomonadota</taxon>
        <taxon>Gammaproteobacteria</taxon>
        <taxon>Vibrionales</taxon>
        <taxon>Vibrionaceae</taxon>
        <taxon>Vibrio</taxon>
    </lineage>
</organism>
<keyword id="KW-0067">ATP-binding</keyword>
<keyword id="KW-0119">Carbohydrate metabolism</keyword>
<keyword id="KW-0418">Kinase</keyword>
<keyword id="KW-0479">Metal-binding</keyword>
<keyword id="KW-0547">Nucleotide-binding</keyword>
<keyword id="KW-0808">Transferase</keyword>
<keyword id="KW-0862">Zinc</keyword>
<proteinExistence type="inferred from homology"/>
<reference key="1">
    <citation type="submission" date="2007-03" db="EMBL/GenBank/DDBJ databases">
        <authorList>
            <person name="Heidelberg J."/>
        </authorList>
    </citation>
    <scope>NUCLEOTIDE SEQUENCE [LARGE SCALE GENOMIC DNA]</scope>
    <source>
        <strain>ATCC 39541 / Classical Ogawa 395 / O395</strain>
    </source>
</reference>
<reference key="2">
    <citation type="journal article" date="2008" name="PLoS ONE">
        <title>A recalibrated molecular clock and independent origins for the cholera pandemic clones.</title>
        <authorList>
            <person name="Feng L."/>
            <person name="Reeves P.R."/>
            <person name="Lan R."/>
            <person name="Ren Y."/>
            <person name="Gao C."/>
            <person name="Zhou Z."/>
            <person name="Ren Y."/>
            <person name="Cheng J."/>
            <person name="Wang W."/>
            <person name="Wang J."/>
            <person name="Qian W."/>
            <person name="Li D."/>
            <person name="Wang L."/>
        </authorList>
    </citation>
    <scope>NUCLEOTIDE SEQUENCE [LARGE SCALE GENOMIC DNA]</scope>
    <source>
        <strain>ATCC 39541 / Classical Ogawa 395 / O395</strain>
    </source>
</reference>
<feature type="chain" id="PRO_1000073168" description="N-acetylmannosamine kinase">
    <location>
        <begin position="1"/>
        <end position="287"/>
    </location>
</feature>
<feature type="binding site" evidence="1">
    <location>
        <begin position="5"/>
        <end position="12"/>
    </location>
    <ligand>
        <name>ATP</name>
        <dbReference type="ChEBI" id="CHEBI:30616"/>
    </ligand>
</feature>
<feature type="binding site" evidence="1">
    <location>
        <begin position="131"/>
        <end position="138"/>
    </location>
    <ligand>
        <name>ATP</name>
        <dbReference type="ChEBI" id="CHEBI:30616"/>
    </ligand>
</feature>
<feature type="binding site" evidence="1">
    <location>
        <position position="155"/>
    </location>
    <ligand>
        <name>Zn(2+)</name>
        <dbReference type="ChEBI" id="CHEBI:29105"/>
    </ligand>
</feature>
<feature type="binding site" evidence="1">
    <location>
        <position position="165"/>
    </location>
    <ligand>
        <name>Zn(2+)</name>
        <dbReference type="ChEBI" id="CHEBI:29105"/>
    </ligand>
</feature>
<feature type="binding site" evidence="1">
    <location>
        <position position="167"/>
    </location>
    <ligand>
        <name>Zn(2+)</name>
        <dbReference type="ChEBI" id="CHEBI:29105"/>
    </ligand>
</feature>
<feature type="binding site" evidence="1">
    <location>
        <position position="172"/>
    </location>
    <ligand>
        <name>Zn(2+)</name>
        <dbReference type="ChEBI" id="CHEBI:29105"/>
    </ligand>
</feature>
<sequence>MRTLAIDIGGTKIALAIVEEGTIIQRYQIATPVVQDVTKFVQAILEKVTEWLPSIDYVGVSTTGYVTPEGITSINPETLNFPVPFPLAQTLEQLTNKPVSILNDAQAAAWFEFVQLKNPSLNMAFITVSTGVGGGIIIDGKLHKGNSGLAGHIGHMSVAIEGPLCGCGQRGCVESMASGNAIQKESEATFTETMSNVELFKQAAFNPKAEAIINRSVQAVATLCCNLKACLDLDIIVLGGGIGLAEGYLERLNKAIQSRPSVFHIPVTPAHGDYDACLLGAAFQFKE</sequence>
<accession>A5F7C0</accession>
<accession>C3M1H6</accession>